<feature type="chain" id="PRO_0000296275" description="Zinc finger protein 664">
    <location>
        <begin position="1"/>
        <end position="261"/>
    </location>
</feature>
<feature type="zinc finger region" description="C2H2-type 1" evidence="2">
    <location>
        <begin position="3"/>
        <end position="25"/>
    </location>
</feature>
<feature type="zinc finger region" description="C2H2-type 2" evidence="2">
    <location>
        <begin position="31"/>
        <end position="53"/>
    </location>
</feature>
<feature type="zinc finger region" description="C2H2-type 3" evidence="2">
    <location>
        <begin position="59"/>
        <end position="81"/>
    </location>
</feature>
<feature type="zinc finger region" description="C2H2-type 4" evidence="2">
    <location>
        <begin position="87"/>
        <end position="109"/>
    </location>
</feature>
<feature type="zinc finger region" description="C2H2-type 5" evidence="2">
    <location>
        <begin position="115"/>
        <end position="137"/>
    </location>
</feature>
<feature type="zinc finger region" description="C2H2-type 6" evidence="2">
    <location>
        <begin position="143"/>
        <end position="165"/>
    </location>
</feature>
<feature type="zinc finger region" description="C2H2-type 7" evidence="2">
    <location>
        <begin position="171"/>
        <end position="193"/>
    </location>
</feature>
<feature type="zinc finger region" description="C2H2-type 8" evidence="2">
    <location>
        <begin position="199"/>
        <end position="221"/>
    </location>
</feature>
<feature type="zinc finger region" description="C2H2-type 9" evidence="2">
    <location>
        <begin position="227"/>
        <end position="249"/>
    </location>
</feature>
<feature type="cross-link" description="Glycyl lysine isopeptide (Lys-Gly) (interchain with G-Cter in SUMO2)" evidence="1">
    <location>
        <position position="257"/>
    </location>
</feature>
<name>ZN664_PONAB</name>
<proteinExistence type="evidence at transcript level"/>
<sequence>MIYKCPMCREFFSERADLFMHQKIHTAEKPHKCDKCDKGFFHISELHIHWRDHTGEKVYKCDDCGKDFSTTTKLNRHKKIHTVEKPYKCYECGKAFNWSSHLQIHMRVHTGEKPYVCSECGRGFSNSSNLCMHQRVHTGEKPFKCEECGKAFRHTSSLCMHQRVHTGEKLYKCYECGKAFSQSSSLCIHQRVHTGEKPYRCCGCGKAFSQSSSLCIHQRVHTGEKPFKCDECGKAFSQSTSLCIHQRVHTKERNHLKISVI</sequence>
<dbReference type="EMBL" id="CR858986">
    <property type="protein sequence ID" value="CAH91181.1"/>
    <property type="molecule type" value="mRNA"/>
</dbReference>
<dbReference type="RefSeq" id="NP_001125693.1">
    <property type="nucleotide sequence ID" value="NM_001132221.2"/>
</dbReference>
<dbReference type="SMR" id="Q5RAM9"/>
<dbReference type="STRING" id="9601.ENSPPYP00000005888"/>
<dbReference type="GeneID" id="100172615"/>
<dbReference type="KEGG" id="pon:100172615"/>
<dbReference type="CTD" id="144348"/>
<dbReference type="eggNOG" id="KOG1721">
    <property type="taxonomic scope" value="Eukaryota"/>
</dbReference>
<dbReference type="InParanoid" id="Q5RAM9"/>
<dbReference type="OrthoDB" id="654211at2759"/>
<dbReference type="Proteomes" id="UP000001595">
    <property type="component" value="Unplaced"/>
</dbReference>
<dbReference type="GO" id="GO:0005654">
    <property type="term" value="C:nucleoplasm"/>
    <property type="evidence" value="ECO:0007669"/>
    <property type="project" value="TreeGrafter"/>
</dbReference>
<dbReference type="GO" id="GO:0001227">
    <property type="term" value="F:DNA-binding transcription repressor activity, RNA polymerase II-specific"/>
    <property type="evidence" value="ECO:0007669"/>
    <property type="project" value="TreeGrafter"/>
</dbReference>
<dbReference type="GO" id="GO:0000978">
    <property type="term" value="F:RNA polymerase II cis-regulatory region sequence-specific DNA binding"/>
    <property type="evidence" value="ECO:0007669"/>
    <property type="project" value="TreeGrafter"/>
</dbReference>
<dbReference type="GO" id="GO:0008270">
    <property type="term" value="F:zinc ion binding"/>
    <property type="evidence" value="ECO:0007669"/>
    <property type="project" value="UniProtKB-KW"/>
</dbReference>
<dbReference type="GO" id="GO:0001817">
    <property type="term" value="P:regulation of cytokine production"/>
    <property type="evidence" value="ECO:0007669"/>
    <property type="project" value="TreeGrafter"/>
</dbReference>
<dbReference type="GO" id="GO:0002682">
    <property type="term" value="P:regulation of immune system process"/>
    <property type="evidence" value="ECO:0007669"/>
    <property type="project" value="TreeGrafter"/>
</dbReference>
<dbReference type="FunFam" id="3.30.160.60:FF:000029">
    <property type="entry name" value="GLI family zinc finger 4"/>
    <property type="match status" value="2"/>
</dbReference>
<dbReference type="FunFam" id="3.30.160.60:FF:000661">
    <property type="entry name" value="paternally-expressed gene 3 protein-like"/>
    <property type="match status" value="1"/>
</dbReference>
<dbReference type="FunFam" id="3.30.160.60:FF:002090">
    <property type="entry name" value="Zinc finger protein 473"/>
    <property type="match status" value="2"/>
</dbReference>
<dbReference type="FunFam" id="3.30.160.60:FF:001256">
    <property type="entry name" value="zinc finger protein 664"/>
    <property type="match status" value="1"/>
</dbReference>
<dbReference type="FunFam" id="3.30.160.60:FF:001310">
    <property type="entry name" value="zinc finger protein 664"/>
    <property type="match status" value="1"/>
</dbReference>
<dbReference type="FunFam" id="3.30.160.60:FF:001493">
    <property type="entry name" value="zinc finger protein 664"/>
    <property type="match status" value="1"/>
</dbReference>
<dbReference type="Gene3D" id="3.30.160.60">
    <property type="entry name" value="Classic Zinc Finger"/>
    <property type="match status" value="9"/>
</dbReference>
<dbReference type="InterPro" id="IPR036236">
    <property type="entry name" value="Znf_C2H2_sf"/>
</dbReference>
<dbReference type="InterPro" id="IPR013087">
    <property type="entry name" value="Znf_C2H2_type"/>
</dbReference>
<dbReference type="PANTHER" id="PTHR24399:SF75">
    <property type="entry name" value="ZFP14 ZINC FINGER PROTEIN-RELATED"/>
    <property type="match status" value="1"/>
</dbReference>
<dbReference type="PANTHER" id="PTHR24399">
    <property type="entry name" value="ZINC FINGER AND BTB DOMAIN-CONTAINING"/>
    <property type="match status" value="1"/>
</dbReference>
<dbReference type="Pfam" id="PF00096">
    <property type="entry name" value="zf-C2H2"/>
    <property type="match status" value="8"/>
</dbReference>
<dbReference type="SMART" id="SM00355">
    <property type="entry name" value="ZnF_C2H2"/>
    <property type="match status" value="9"/>
</dbReference>
<dbReference type="SUPFAM" id="SSF57667">
    <property type="entry name" value="beta-beta-alpha zinc fingers"/>
    <property type="match status" value="5"/>
</dbReference>
<dbReference type="PROSITE" id="PS00028">
    <property type="entry name" value="ZINC_FINGER_C2H2_1"/>
    <property type="match status" value="9"/>
</dbReference>
<dbReference type="PROSITE" id="PS50157">
    <property type="entry name" value="ZINC_FINGER_C2H2_2"/>
    <property type="match status" value="9"/>
</dbReference>
<protein>
    <recommendedName>
        <fullName>Zinc finger protein 664</fullName>
    </recommendedName>
</protein>
<comment type="function">
    <text>May be involved in transcriptional regulation.</text>
</comment>
<comment type="subcellular location">
    <subcellularLocation>
        <location evidence="3">Nucleus</location>
    </subcellularLocation>
</comment>
<comment type="similarity">
    <text evidence="3">Belongs to the krueppel C2H2-type zinc-finger protein family.</text>
</comment>
<organism>
    <name type="scientific">Pongo abelii</name>
    <name type="common">Sumatran orangutan</name>
    <name type="synonym">Pongo pygmaeus abelii</name>
    <dbReference type="NCBI Taxonomy" id="9601"/>
    <lineage>
        <taxon>Eukaryota</taxon>
        <taxon>Metazoa</taxon>
        <taxon>Chordata</taxon>
        <taxon>Craniata</taxon>
        <taxon>Vertebrata</taxon>
        <taxon>Euteleostomi</taxon>
        <taxon>Mammalia</taxon>
        <taxon>Eutheria</taxon>
        <taxon>Euarchontoglires</taxon>
        <taxon>Primates</taxon>
        <taxon>Haplorrhini</taxon>
        <taxon>Catarrhini</taxon>
        <taxon>Hominidae</taxon>
        <taxon>Pongo</taxon>
    </lineage>
</organism>
<accession>Q5RAM9</accession>
<keyword id="KW-0238">DNA-binding</keyword>
<keyword id="KW-1017">Isopeptide bond</keyword>
<keyword id="KW-0479">Metal-binding</keyword>
<keyword id="KW-0539">Nucleus</keyword>
<keyword id="KW-1185">Reference proteome</keyword>
<keyword id="KW-0677">Repeat</keyword>
<keyword id="KW-0804">Transcription</keyword>
<keyword id="KW-0805">Transcription regulation</keyword>
<keyword id="KW-0832">Ubl conjugation</keyword>
<keyword id="KW-0862">Zinc</keyword>
<keyword id="KW-0863">Zinc-finger</keyword>
<reference key="1">
    <citation type="submission" date="2004-11" db="EMBL/GenBank/DDBJ databases">
        <authorList>
            <consortium name="The German cDNA consortium"/>
        </authorList>
    </citation>
    <scope>NUCLEOTIDE SEQUENCE [LARGE SCALE MRNA]</scope>
    <source>
        <tissue>Brain cortex</tissue>
    </source>
</reference>
<evidence type="ECO:0000250" key="1">
    <source>
        <dbReference type="UniProtKB" id="Q8N3J9"/>
    </source>
</evidence>
<evidence type="ECO:0000255" key="2">
    <source>
        <dbReference type="PROSITE-ProRule" id="PRU00042"/>
    </source>
</evidence>
<evidence type="ECO:0000305" key="3"/>
<gene>
    <name type="primary">ZNF664</name>
</gene>